<gene>
    <name type="primary">EXPA7</name>
    <name type="synonym">EXP7</name>
    <name type="ordered locus">Os03g0822000</name>
    <name type="ordered locus">LOC_Os03g60720</name>
    <name evidence="8" type="ORF">OsJ_13156</name>
    <name type="ORF">OSJNBb0081B07.24</name>
</gene>
<dbReference type="EMBL" id="AF247164">
    <property type="protein sequence ID" value="AAF62182.1"/>
    <property type="molecule type" value="mRNA"/>
</dbReference>
<dbReference type="EMBL" id="AF394547">
    <property type="protein sequence ID" value="AAL24483.1"/>
    <property type="molecule type" value="Genomic_DNA"/>
</dbReference>
<dbReference type="EMBL" id="AC093018">
    <property type="protein sequence ID" value="AAO18447.1"/>
    <property type="molecule type" value="Genomic_DNA"/>
</dbReference>
<dbReference type="EMBL" id="DP000009">
    <property type="protein sequence ID" value="ABF99601.1"/>
    <property type="molecule type" value="Genomic_DNA"/>
</dbReference>
<dbReference type="EMBL" id="AP008209">
    <property type="protein sequence ID" value="BAF13645.1"/>
    <property type="molecule type" value="Genomic_DNA"/>
</dbReference>
<dbReference type="EMBL" id="AP014959">
    <property type="protein sequence ID" value="BAS87104.1"/>
    <property type="molecule type" value="Genomic_DNA"/>
</dbReference>
<dbReference type="EMBL" id="CM000140">
    <property type="protein sequence ID" value="EEE60198.1"/>
    <property type="molecule type" value="Genomic_DNA"/>
</dbReference>
<dbReference type="EMBL" id="AK101784">
    <property type="protein sequence ID" value="BAG95225.1"/>
    <property type="molecule type" value="mRNA"/>
</dbReference>
<dbReference type="EMBL" id="AK119215">
    <property type="protein sequence ID" value="BAG99584.1"/>
    <property type="molecule type" value="mRNA"/>
</dbReference>
<dbReference type="PIR" id="T50659">
    <property type="entry name" value="T50659"/>
</dbReference>
<dbReference type="RefSeq" id="XP_015631937.1">
    <property type="nucleotide sequence ID" value="XM_015776451.1"/>
</dbReference>
<dbReference type="SMR" id="Q852A1"/>
<dbReference type="FunCoup" id="Q852A1">
    <property type="interactions" value="13"/>
</dbReference>
<dbReference type="STRING" id="39947.Q852A1"/>
<dbReference type="PaxDb" id="39947-Q852A1"/>
<dbReference type="EnsemblPlants" id="Os03t0822000-01">
    <property type="protein sequence ID" value="Os03t0822000-01"/>
    <property type="gene ID" value="Os03g0822000"/>
</dbReference>
<dbReference type="EnsemblPlants" id="Os03t0822000-02">
    <property type="protein sequence ID" value="Os03t0822000-02"/>
    <property type="gene ID" value="Os03g0822000"/>
</dbReference>
<dbReference type="Gramene" id="Os03t0822000-01">
    <property type="protein sequence ID" value="Os03t0822000-01"/>
    <property type="gene ID" value="Os03g0822000"/>
</dbReference>
<dbReference type="Gramene" id="Os03t0822000-02">
    <property type="protein sequence ID" value="Os03t0822000-02"/>
    <property type="gene ID" value="Os03g0822000"/>
</dbReference>
<dbReference type="KEGG" id="dosa:Os03g0822000"/>
<dbReference type="eggNOG" id="ENOG502QR06">
    <property type="taxonomic scope" value="Eukaryota"/>
</dbReference>
<dbReference type="HOGENOM" id="CLU_027462_0_1_1"/>
<dbReference type="InParanoid" id="Q852A1"/>
<dbReference type="OMA" id="NIAPSHW"/>
<dbReference type="OrthoDB" id="5823761at2759"/>
<dbReference type="Proteomes" id="UP000000763">
    <property type="component" value="Chromosome 3"/>
</dbReference>
<dbReference type="Proteomes" id="UP000007752">
    <property type="component" value="Chromosome 3"/>
</dbReference>
<dbReference type="Proteomes" id="UP000059680">
    <property type="component" value="Chromosome 3"/>
</dbReference>
<dbReference type="ExpressionAtlas" id="Q852A1">
    <property type="expression patterns" value="baseline and differential"/>
</dbReference>
<dbReference type="GO" id="GO:0005576">
    <property type="term" value="C:extracellular region"/>
    <property type="evidence" value="ECO:0007669"/>
    <property type="project" value="UniProtKB-KW"/>
</dbReference>
<dbReference type="GO" id="GO:0016020">
    <property type="term" value="C:membrane"/>
    <property type="evidence" value="ECO:0007669"/>
    <property type="project" value="UniProtKB-SubCell"/>
</dbReference>
<dbReference type="GO" id="GO:0009828">
    <property type="term" value="P:plant-type cell wall loosening"/>
    <property type="evidence" value="ECO:0000250"/>
    <property type="project" value="UniProtKB"/>
</dbReference>
<dbReference type="CDD" id="cd22274">
    <property type="entry name" value="DPBB_EXPA_N"/>
    <property type="match status" value="1"/>
</dbReference>
<dbReference type="FunFam" id="2.40.40.10:FF:000001">
    <property type="entry name" value="Expansin"/>
    <property type="match status" value="1"/>
</dbReference>
<dbReference type="FunFam" id="2.60.40.760:FF:000001">
    <property type="entry name" value="Expansin"/>
    <property type="match status" value="1"/>
</dbReference>
<dbReference type="Gene3D" id="2.60.40.760">
    <property type="entry name" value="Expansin, cellulose-binding-like domain"/>
    <property type="match status" value="1"/>
</dbReference>
<dbReference type="Gene3D" id="2.40.40.10">
    <property type="entry name" value="RlpA-like domain"/>
    <property type="match status" value="1"/>
</dbReference>
<dbReference type="InterPro" id="IPR007118">
    <property type="entry name" value="Expan_Lol_pI"/>
</dbReference>
<dbReference type="InterPro" id="IPR002963">
    <property type="entry name" value="Expansin"/>
</dbReference>
<dbReference type="InterPro" id="IPR007112">
    <property type="entry name" value="Expansin/allergen_DPBB_dom"/>
</dbReference>
<dbReference type="InterPro" id="IPR007117">
    <property type="entry name" value="Expansin_CBD"/>
</dbReference>
<dbReference type="InterPro" id="IPR036749">
    <property type="entry name" value="Expansin_CBD_sf"/>
</dbReference>
<dbReference type="InterPro" id="IPR009009">
    <property type="entry name" value="RlpA-like_DPBB"/>
</dbReference>
<dbReference type="InterPro" id="IPR036908">
    <property type="entry name" value="RlpA-like_sf"/>
</dbReference>
<dbReference type="PANTHER" id="PTHR31867">
    <property type="entry name" value="EXPANSIN-A15"/>
    <property type="match status" value="1"/>
</dbReference>
<dbReference type="Pfam" id="PF03330">
    <property type="entry name" value="DPBB_1"/>
    <property type="match status" value="1"/>
</dbReference>
<dbReference type="Pfam" id="PF01357">
    <property type="entry name" value="Expansin_C"/>
    <property type="match status" value="1"/>
</dbReference>
<dbReference type="PRINTS" id="PR01226">
    <property type="entry name" value="EXPANSIN"/>
</dbReference>
<dbReference type="PRINTS" id="PR01225">
    <property type="entry name" value="EXPANSNFAMLY"/>
</dbReference>
<dbReference type="SMART" id="SM00837">
    <property type="entry name" value="DPBB_1"/>
    <property type="match status" value="1"/>
</dbReference>
<dbReference type="SUPFAM" id="SSF50685">
    <property type="entry name" value="Barwin-like endoglucanases"/>
    <property type="match status" value="1"/>
</dbReference>
<dbReference type="SUPFAM" id="SSF49590">
    <property type="entry name" value="PHL pollen allergen"/>
    <property type="match status" value="1"/>
</dbReference>
<dbReference type="PROSITE" id="PS50843">
    <property type="entry name" value="EXPANSIN_CBD"/>
    <property type="match status" value="1"/>
</dbReference>
<dbReference type="PROSITE" id="PS50842">
    <property type="entry name" value="EXPANSIN_EG45"/>
    <property type="match status" value="1"/>
</dbReference>
<feature type="signal peptide" evidence="2">
    <location>
        <begin position="1"/>
        <end position="25"/>
    </location>
</feature>
<feature type="chain" id="PRO_0000251986" description="Expansin-A7">
    <location>
        <begin position="26"/>
        <end position="264"/>
    </location>
</feature>
<feature type="domain" description="Expansin-like EG45" evidence="4">
    <location>
        <begin position="54"/>
        <end position="170"/>
    </location>
</feature>
<feature type="domain" description="Expansin-like CBD" evidence="3">
    <location>
        <begin position="180"/>
        <end position="259"/>
    </location>
</feature>
<feature type="disulfide bond" evidence="4">
    <location>
        <begin position="57"/>
        <end position="85"/>
    </location>
</feature>
<feature type="disulfide bond" evidence="4">
    <location>
        <begin position="88"/>
        <end position="165"/>
    </location>
</feature>
<feature type="disulfide bond" evidence="4">
    <location>
        <begin position="93"/>
        <end position="102"/>
    </location>
</feature>
<reference key="1">
    <citation type="journal article" date="2002" name="Plant Physiol.">
        <title>Expression of alpha-expansin and expansin-like genes in deepwater rice.</title>
        <authorList>
            <person name="Lee Y."/>
            <person name="Kende H."/>
        </authorList>
    </citation>
    <scope>NUCLEOTIDE SEQUENCE [GENOMIC DNA / MRNA]</scope>
    <scope>DEVELOPMENTAL STAGE</scope>
    <scope>INDUCTION</scope>
</reference>
<reference key="2">
    <citation type="journal article" date="2005" name="Genome Res.">
        <title>Sequence, annotation, and analysis of synteny between rice chromosome 3 and diverged grass species.</title>
        <authorList>
            <consortium name="The rice chromosome 3 sequencing consortium"/>
            <person name="Buell C.R."/>
            <person name="Yuan Q."/>
            <person name="Ouyang S."/>
            <person name="Liu J."/>
            <person name="Zhu W."/>
            <person name="Wang A."/>
            <person name="Maiti R."/>
            <person name="Haas B."/>
            <person name="Wortman J."/>
            <person name="Pertea M."/>
            <person name="Jones K.M."/>
            <person name="Kim M."/>
            <person name="Overton L."/>
            <person name="Tsitrin T."/>
            <person name="Fadrosh D."/>
            <person name="Bera J."/>
            <person name="Weaver B."/>
            <person name="Jin S."/>
            <person name="Johri S."/>
            <person name="Reardon M."/>
            <person name="Webb K."/>
            <person name="Hill J."/>
            <person name="Moffat K."/>
            <person name="Tallon L."/>
            <person name="Van Aken S."/>
            <person name="Lewis M."/>
            <person name="Utterback T."/>
            <person name="Feldblyum T."/>
            <person name="Zismann V."/>
            <person name="Iobst S."/>
            <person name="Hsiao J."/>
            <person name="de Vazeille A.R."/>
            <person name="Salzberg S.L."/>
            <person name="White O."/>
            <person name="Fraser C.M."/>
            <person name="Yu Y."/>
            <person name="Kim H."/>
            <person name="Rambo T."/>
            <person name="Currie J."/>
            <person name="Collura K."/>
            <person name="Kernodle-Thompson S."/>
            <person name="Wei F."/>
            <person name="Kudrna K."/>
            <person name="Ammiraju J.S.S."/>
            <person name="Luo M."/>
            <person name="Goicoechea J.L."/>
            <person name="Wing R.A."/>
            <person name="Henry D."/>
            <person name="Oates R."/>
            <person name="Palmer M."/>
            <person name="Pries G."/>
            <person name="Saski C."/>
            <person name="Simmons J."/>
            <person name="Soderlund C."/>
            <person name="Nelson W."/>
            <person name="de la Bastide M."/>
            <person name="Spiegel L."/>
            <person name="Nascimento L."/>
            <person name="Huang E."/>
            <person name="Preston R."/>
            <person name="Zutavern T."/>
            <person name="Palmer L."/>
            <person name="O'Shaughnessy A."/>
            <person name="Dike S."/>
            <person name="McCombie W.R."/>
            <person name="Minx P."/>
            <person name="Cordum H."/>
            <person name="Wilson R."/>
            <person name="Jin W."/>
            <person name="Lee H.R."/>
            <person name="Jiang J."/>
            <person name="Jackson S."/>
        </authorList>
    </citation>
    <scope>NUCLEOTIDE SEQUENCE [LARGE SCALE GENOMIC DNA]</scope>
    <source>
        <strain>cv. Nipponbare</strain>
    </source>
</reference>
<reference key="3">
    <citation type="journal article" date="2005" name="Nature">
        <title>The map-based sequence of the rice genome.</title>
        <authorList>
            <consortium name="International rice genome sequencing project (IRGSP)"/>
        </authorList>
    </citation>
    <scope>NUCLEOTIDE SEQUENCE [LARGE SCALE GENOMIC DNA]</scope>
    <source>
        <strain>cv. Nipponbare</strain>
    </source>
</reference>
<reference key="4">
    <citation type="journal article" date="2008" name="Nucleic Acids Res.">
        <title>The rice annotation project database (RAP-DB): 2008 update.</title>
        <authorList>
            <consortium name="The rice annotation project (RAP)"/>
        </authorList>
    </citation>
    <scope>GENOME REANNOTATION</scope>
    <source>
        <strain>cv. Nipponbare</strain>
    </source>
</reference>
<reference key="5">
    <citation type="journal article" date="2013" name="Rice">
        <title>Improvement of the Oryza sativa Nipponbare reference genome using next generation sequence and optical map data.</title>
        <authorList>
            <person name="Kawahara Y."/>
            <person name="de la Bastide M."/>
            <person name="Hamilton J.P."/>
            <person name="Kanamori H."/>
            <person name="McCombie W.R."/>
            <person name="Ouyang S."/>
            <person name="Schwartz D.C."/>
            <person name="Tanaka T."/>
            <person name="Wu J."/>
            <person name="Zhou S."/>
            <person name="Childs K.L."/>
            <person name="Davidson R.M."/>
            <person name="Lin H."/>
            <person name="Quesada-Ocampo L."/>
            <person name="Vaillancourt B."/>
            <person name="Sakai H."/>
            <person name="Lee S.S."/>
            <person name="Kim J."/>
            <person name="Numa H."/>
            <person name="Itoh T."/>
            <person name="Buell C.R."/>
            <person name="Matsumoto T."/>
        </authorList>
    </citation>
    <scope>GENOME REANNOTATION</scope>
    <source>
        <strain>cv. Nipponbare</strain>
    </source>
</reference>
<reference key="6">
    <citation type="journal article" date="2005" name="PLoS Biol.">
        <title>The genomes of Oryza sativa: a history of duplications.</title>
        <authorList>
            <person name="Yu J."/>
            <person name="Wang J."/>
            <person name="Lin W."/>
            <person name="Li S."/>
            <person name="Li H."/>
            <person name="Zhou J."/>
            <person name="Ni P."/>
            <person name="Dong W."/>
            <person name="Hu S."/>
            <person name="Zeng C."/>
            <person name="Zhang J."/>
            <person name="Zhang Y."/>
            <person name="Li R."/>
            <person name="Xu Z."/>
            <person name="Li S."/>
            <person name="Li X."/>
            <person name="Zheng H."/>
            <person name="Cong L."/>
            <person name="Lin L."/>
            <person name="Yin J."/>
            <person name="Geng J."/>
            <person name="Li G."/>
            <person name="Shi J."/>
            <person name="Liu J."/>
            <person name="Lv H."/>
            <person name="Li J."/>
            <person name="Wang J."/>
            <person name="Deng Y."/>
            <person name="Ran L."/>
            <person name="Shi X."/>
            <person name="Wang X."/>
            <person name="Wu Q."/>
            <person name="Li C."/>
            <person name="Ren X."/>
            <person name="Wang J."/>
            <person name="Wang X."/>
            <person name="Li D."/>
            <person name="Liu D."/>
            <person name="Zhang X."/>
            <person name="Ji Z."/>
            <person name="Zhao W."/>
            <person name="Sun Y."/>
            <person name="Zhang Z."/>
            <person name="Bao J."/>
            <person name="Han Y."/>
            <person name="Dong L."/>
            <person name="Ji J."/>
            <person name="Chen P."/>
            <person name="Wu S."/>
            <person name="Liu J."/>
            <person name="Xiao Y."/>
            <person name="Bu D."/>
            <person name="Tan J."/>
            <person name="Yang L."/>
            <person name="Ye C."/>
            <person name="Zhang J."/>
            <person name="Xu J."/>
            <person name="Zhou Y."/>
            <person name="Yu Y."/>
            <person name="Zhang B."/>
            <person name="Zhuang S."/>
            <person name="Wei H."/>
            <person name="Liu B."/>
            <person name="Lei M."/>
            <person name="Yu H."/>
            <person name="Li Y."/>
            <person name="Xu H."/>
            <person name="Wei S."/>
            <person name="He X."/>
            <person name="Fang L."/>
            <person name="Zhang Z."/>
            <person name="Zhang Y."/>
            <person name="Huang X."/>
            <person name="Su Z."/>
            <person name="Tong W."/>
            <person name="Li J."/>
            <person name="Tong Z."/>
            <person name="Li S."/>
            <person name="Ye J."/>
            <person name="Wang L."/>
            <person name="Fang L."/>
            <person name="Lei T."/>
            <person name="Chen C.-S."/>
            <person name="Chen H.-C."/>
            <person name="Xu Z."/>
            <person name="Li H."/>
            <person name="Huang H."/>
            <person name="Zhang F."/>
            <person name="Xu H."/>
            <person name="Li N."/>
            <person name="Zhao C."/>
            <person name="Li S."/>
            <person name="Dong L."/>
            <person name="Huang Y."/>
            <person name="Li L."/>
            <person name="Xi Y."/>
            <person name="Qi Q."/>
            <person name="Li W."/>
            <person name="Zhang B."/>
            <person name="Hu W."/>
            <person name="Zhang Y."/>
            <person name="Tian X."/>
            <person name="Jiao Y."/>
            <person name="Liang X."/>
            <person name="Jin J."/>
            <person name="Gao L."/>
            <person name="Zheng W."/>
            <person name="Hao B."/>
            <person name="Liu S.-M."/>
            <person name="Wang W."/>
            <person name="Yuan L."/>
            <person name="Cao M."/>
            <person name="McDermott J."/>
            <person name="Samudrala R."/>
            <person name="Wang J."/>
            <person name="Wong G.K.-S."/>
            <person name="Yang H."/>
        </authorList>
    </citation>
    <scope>NUCLEOTIDE SEQUENCE [LARGE SCALE GENOMIC DNA]</scope>
    <source>
        <strain>cv. Nipponbare</strain>
    </source>
</reference>
<reference key="7">
    <citation type="journal article" date="2003" name="Science">
        <title>Collection, mapping, and annotation of over 28,000 cDNA clones from japonica rice.</title>
        <authorList>
            <consortium name="The rice full-length cDNA consortium"/>
        </authorList>
    </citation>
    <scope>NUCLEOTIDE SEQUENCE [LARGE SCALE MRNA]</scope>
    <source>
        <strain>cv. Nipponbare</strain>
    </source>
</reference>
<reference key="8">
    <citation type="journal article" date="2004" name="Plant Mol. Biol.">
        <title>Nomenclature for members of the expansin superfamily of genes and proteins.</title>
        <authorList>
            <person name="Kende H."/>
            <person name="Bradford K.J."/>
            <person name="Brummell D.A."/>
            <person name="Cho H.-T."/>
            <person name="Cosgrove D.J."/>
            <person name="Fleming A.J."/>
            <person name="Gehring C."/>
            <person name="Lee Y."/>
            <person name="McQueen-Mason S.J."/>
            <person name="Rose J.K.C."/>
            <person name="Voesenek L.A.C."/>
        </authorList>
    </citation>
    <scope>NOMENCLATURE</scope>
</reference>
<reference key="9">
    <citation type="journal article" date="2005" name="Mol. Cells">
        <title>Characterization and transcriptional expression of the alpha-expansin gene family in rice.</title>
        <authorList>
            <person name="Shin J.-H."/>
            <person name="Jeong D.-H."/>
            <person name="Park M.C."/>
            <person name="An G."/>
        </authorList>
    </citation>
    <scope>TISSUE SPECIFICITY</scope>
</reference>
<name>EXPA7_ORYSJ</name>
<accession>Q852A1</accession>
<accession>Q0DM93</accession>
<accession>Q9M4X6</accession>
<evidence type="ECO:0000250" key="1"/>
<evidence type="ECO:0000255" key="2"/>
<evidence type="ECO:0000255" key="3">
    <source>
        <dbReference type="PROSITE-ProRule" id="PRU00078"/>
    </source>
</evidence>
<evidence type="ECO:0000255" key="4">
    <source>
        <dbReference type="PROSITE-ProRule" id="PRU00079"/>
    </source>
</evidence>
<evidence type="ECO:0000269" key="5">
    <source>
    </source>
</evidence>
<evidence type="ECO:0000269" key="6">
    <source>
    </source>
</evidence>
<evidence type="ECO:0000305" key="7"/>
<evidence type="ECO:0000312" key="8">
    <source>
        <dbReference type="EMBL" id="EEE60198.1"/>
    </source>
</evidence>
<proteinExistence type="evidence at transcript level"/>
<comment type="function">
    <text evidence="1">May cause loosening and extension of plant cell walls by disrupting non-covalent bonding between cellulose microfibrils and matrix glucans. No enzymatic activity has been found. May be required for rapid internodal elongation in deepwater rice during submergence (By similarity).</text>
</comment>
<comment type="subcellular location">
    <subcellularLocation>
        <location evidence="1">Secreted</location>
        <location evidence="1">Cell wall</location>
    </subcellularLocation>
    <subcellularLocation>
        <location evidence="1">Membrane</location>
        <topology evidence="1">Peripheral membrane protein</topology>
    </subcellularLocation>
</comment>
<comment type="tissue specificity">
    <text evidence="6">Expressed in panicles.</text>
</comment>
<comment type="developmental stage">
    <text evidence="5">Expressed in the growing regions of roots, internodes and leaves.</text>
</comment>
<comment type="induction">
    <text evidence="5">By gibberellin (GA3) and wounding.</text>
</comment>
<comment type="similarity">
    <text evidence="7">Belongs to the expansin family. Expansin A subfamily.</text>
</comment>
<comment type="online information" name="EXPANSIN homepage">
    <link uri="https://www.dept.psu.edu/biology/groups/expansins/index.htm"/>
</comment>
<protein>
    <recommendedName>
        <fullName>Expansin-A7</fullName>
    </recommendedName>
    <alternativeName>
        <fullName>Alpha-expansin-7</fullName>
    </alternativeName>
    <alternativeName>
        <fullName>OsEXP7</fullName>
    </alternativeName>
    <alternativeName>
        <fullName>OsEXPA7</fullName>
    </alternativeName>
    <alternativeName>
        <fullName>OsaEXPa1.26</fullName>
    </alternativeName>
</protein>
<keyword id="KW-0134">Cell wall</keyword>
<keyword id="KW-0961">Cell wall biogenesis/degradation</keyword>
<keyword id="KW-1015">Disulfide bond</keyword>
<keyword id="KW-0472">Membrane</keyword>
<keyword id="KW-1185">Reference proteome</keyword>
<keyword id="KW-0964">Secreted</keyword>
<keyword id="KW-0732">Signal</keyword>
<organism>
    <name type="scientific">Oryza sativa subsp. japonica</name>
    <name type="common">Rice</name>
    <dbReference type="NCBI Taxonomy" id="39947"/>
    <lineage>
        <taxon>Eukaryota</taxon>
        <taxon>Viridiplantae</taxon>
        <taxon>Streptophyta</taxon>
        <taxon>Embryophyta</taxon>
        <taxon>Tracheophyta</taxon>
        <taxon>Spermatophyta</taxon>
        <taxon>Magnoliopsida</taxon>
        <taxon>Liliopsida</taxon>
        <taxon>Poales</taxon>
        <taxon>Poaceae</taxon>
        <taxon>BOP clade</taxon>
        <taxon>Oryzoideae</taxon>
        <taxon>Oryzeae</taxon>
        <taxon>Oryzinae</taxon>
        <taxon>Oryza</taxon>
        <taxon>Oryza sativa</taxon>
    </lineage>
</organism>
<sequence length="264" mass="28223">MSPAPRVLVLVVATVVALQVSPAAGRIPGAYGGGEWQSAHATFYGGSDASGTMGGACGYGNLYSQGYGVNNAALSTALFNSGQSCGACFEIKCVNQPGWEWCHPGSPSILITATNFCPPNYALPSDNGGWCNPPRPHFDLAMPMFLHIAEYRAGIVPVSYRRVPCRKKGGVRFTINGFRYFNLVLITNVAGAGDIVRASVKGTSTGWMPMSRNWGQNWQSNSVLVGQALSFRVTGSDRRTSTSWNAAPAGWHFGQTFEGKNFRV</sequence>